<proteinExistence type="inferred from homology"/>
<evidence type="ECO:0000255" key="1">
    <source>
        <dbReference type="HAMAP-Rule" id="MF_00019"/>
    </source>
</evidence>
<evidence type="ECO:0000256" key="2">
    <source>
        <dbReference type="SAM" id="MobiDB-lite"/>
    </source>
</evidence>
<feature type="chain" id="PRO_1000089886" description="Phosphate acyltransferase">
    <location>
        <begin position="1"/>
        <end position="368"/>
    </location>
</feature>
<feature type="region of interest" description="Disordered" evidence="2">
    <location>
        <begin position="337"/>
        <end position="368"/>
    </location>
</feature>
<dbReference type="EC" id="2.3.1.274" evidence="1"/>
<dbReference type="EMBL" id="CP001052">
    <property type="protein sequence ID" value="ACD17307.1"/>
    <property type="molecule type" value="Genomic_DNA"/>
</dbReference>
<dbReference type="RefSeq" id="WP_012433890.1">
    <property type="nucleotide sequence ID" value="NC_010681.1"/>
</dbReference>
<dbReference type="SMR" id="B2T5U3"/>
<dbReference type="STRING" id="398527.Bphyt_2913"/>
<dbReference type="GeneID" id="97307931"/>
<dbReference type="KEGG" id="bpy:Bphyt_2913"/>
<dbReference type="eggNOG" id="COG0416">
    <property type="taxonomic scope" value="Bacteria"/>
</dbReference>
<dbReference type="HOGENOM" id="CLU_039379_1_0_4"/>
<dbReference type="OrthoDB" id="9806408at2"/>
<dbReference type="UniPathway" id="UPA00085"/>
<dbReference type="Proteomes" id="UP000001739">
    <property type="component" value="Chromosome 1"/>
</dbReference>
<dbReference type="GO" id="GO:0005737">
    <property type="term" value="C:cytoplasm"/>
    <property type="evidence" value="ECO:0007669"/>
    <property type="project" value="UniProtKB-SubCell"/>
</dbReference>
<dbReference type="GO" id="GO:0043811">
    <property type="term" value="F:phosphate:acyl-[acyl carrier protein] acyltransferase activity"/>
    <property type="evidence" value="ECO:0007669"/>
    <property type="project" value="UniProtKB-UniRule"/>
</dbReference>
<dbReference type="GO" id="GO:0006633">
    <property type="term" value="P:fatty acid biosynthetic process"/>
    <property type="evidence" value="ECO:0007669"/>
    <property type="project" value="UniProtKB-UniRule"/>
</dbReference>
<dbReference type="GO" id="GO:0008654">
    <property type="term" value="P:phospholipid biosynthetic process"/>
    <property type="evidence" value="ECO:0007669"/>
    <property type="project" value="UniProtKB-KW"/>
</dbReference>
<dbReference type="Gene3D" id="3.40.718.10">
    <property type="entry name" value="Isopropylmalate Dehydrogenase"/>
    <property type="match status" value="1"/>
</dbReference>
<dbReference type="HAMAP" id="MF_00019">
    <property type="entry name" value="PlsX"/>
    <property type="match status" value="1"/>
</dbReference>
<dbReference type="InterPro" id="IPR003664">
    <property type="entry name" value="FA_synthesis"/>
</dbReference>
<dbReference type="InterPro" id="IPR012281">
    <property type="entry name" value="Phospholipid_synth_PlsX-like"/>
</dbReference>
<dbReference type="NCBIfam" id="TIGR00182">
    <property type="entry name" value="plsX"/>
    <property type="match status" value="1"/>
</dbReference>
<dbReference type="PANTHER" id="PTHR30100">
    <property type="entry name" value="FATTY ACID/PHOSPHOLIPID SYNTHESIS PROTEIN PLSX"/>
    <property type="match status" value="1"/>
</dbReference>
<dbReference type="PANTHER" id="PTHR30100:SF1">
    <property type="entry name" value="PHOSPHATE ACYLTRANSFERASE"/>
    <property type="match status" value="1"/>
</dbReference>
<dbReference type="Pfam" id="PF02504">
    <property type="entry name" value="FA_synthesis"/>
    <property type="match status" value="1"/>
</dbReference>
<dbReference type="PIRSF" id="PIRSF002465">
    <property type="entry name" value="Phsphlp_syn_PlsX"/>
    <property type="match status" value="1"/>
</dbReference>
<dbReference type="SUPFAM" id="SSF53659">
    <property type="entry name" value="Isocitrate/Isopropylmalate dehydrogenase-like"/>
    <property type="match status" value="1"/>
</dbReference>
<sequence>MTVKLTIDCMGGDHGPSVTVPAAVNFVRSHPDAELLLVGIESAIRAQLKKLKAQDLPALTVVPASEIVAMDDPVEVALRKKKDSSMRVALNRVKEGEAQACVSAGNTGALMAVSRYVLKTLSGIERPAIASALPNPNGYTMMLDLGANVDCEPQHLLQFAEMGHALVSALEGKDRPTIGLLNIGEEVIKGNDTIKRAGELLRASTLNFHGNVEGNDIFKGTVDVIVCDGFVGNVALKTSEGLAQMLSNIIKEEFGRSWLTKVMAVLALPVLMRFKKRVDHRQYNGAALLGLRGLVIKSHGSADAYGFEWAIKRGYDAVKNGVLERLARAMEENAGSLEQAARDASGAGQASPIAGQPAEPYAAQSSKA</sequence>
<name>PLSX_PARPJ</name>
<organism>
    <name type="scientific">Paraburkholderia phytofirmans (strain DSM 17436 / LMG 22146 / PsJN)</name>
    <name type="common">Burkholderia phytofirmans</name>
    <dbReference type="NCBI Taxonomy" id="398527"/>
    <lineage>
        <taxon>Bacteria</taxon>
        <taxon>Pseudomonadati</taxon>
        <taxon>Pseudomonadota</taxon>
        <taxon>Betaproteobacteria</taxon>
        <taxon>Burkholderiales</taxon>
        <taxon>Burkholderiaceae</taxon>
        <taxon>Paraburkholderia</taxon>
    </lineage>
</organism>
<keyword id="KW-0963">Cytoplasm</keyword>
<keyword id="KW-0444">Lipid biosynthesis</keyword>
<keyword id="KW-0443">Lipid metabolism</keyword>
<keyword id="KW-0594">Phospholipid biosynthesis</keyword>
<keyword id="KW-1208">Phospholipid metabolism</keyword>
<keyword id="KW-0808">Transferase</keyword>
<gene>
    <name evidence="1" type="primary">plsX</name>
    <name type="ordered locus">Bphyt_2913</name>
</gene>
<protein>
    <recommendedName>
        <fullName evidence="1">Phosphate acyltransferase</fullName>
        <ecNumber evidence="1">2.3.1.274</ecNumber>
    </recommendedName>
    <alternativeName>
        <fullName evidence="1">Acyl-ACP phosphotransacylase</fullName>
    </alternativeName>
    <alternativeName>
        <fullName evidence="1">Acyl-[acyl-carrier-protein]--phosphate acyltransferase</fullName>
    </alternativeName>
    <alternativeName>
        <fullName evidence="1">Phosphate-acyl-ACP acyltransferase</fullName>
    </alternativeName>
</protein>
<accession>B2T5U3</accession>
<reference key="1">
    <citation type="journal article" date="2011" name="J. Bacteriol.">
        <title>Complete genome sequence of the plant growth-promoting endophyte Burkholderia phytofirmans strain PsJN.</title>
        <authorList>
            <person name="Weilharter A."/>
            <person name="Mitter B."/>
            <person name="Shin M.V."/>
            <person name="Chain P.S."/>
            <person name="Nowak J."/>
            <person name="Sessitsch A."/>
        </authorList>
    </citation>
    <scope>NUCLEOTIDE SEQUENCE [LARGE SCALE GENOMIC DNA]</scope>
    <source>
        <strain>DSM 17436 / LMG 22146 / PsJN</strain>
    </source>
</reference>
<comment type="function">
    <text evidence="1">Catalyzes the reversible formation of acyl-phosphate (acyl-PO(4)) from acyl-[acyl-carrier-protein] (acyl-ACP). This enzyme utilizes acyl-ACP as fatty acyl donor, but not acyl-CoA.</text>
</comment>
<comment type="catalytic activity">
    <reaction evidence="1">
        <text>a fatty acyl-[ACP] + phosphate = an acyl phosphate + holo-[ACP]</text>
        <dbReference type="Rhea" id="RHEA:42292"/>
        <dbReference type="Rhea" id="RHEA-COMP:9685"/>
        <dbReference type="Rhea" id="RHEA-COMP:14125"/>
        <dbReference type="ChEBI" id="CHEBI:43474"/>
        <dbReference type="ChEBI" id="CHEBI:59918"/>
        <dbReference type="ChEBI" id="CHEBI:64479"/>
        <dbReference type="ChEBI" id="CHEBI:138651"/>
        <dbReference type="EC" id="2.3.1.274"/>
    </reaction>
</comment>
<comment type="pathway">
    <text evidence="1">Lipid metabolism; phospholipid metabolism.</text>
</comment>
<comment type="subunit">
    <text evidence="1">Homodimer. Probably interacts with PlsY.</text>
</comment>
<comment type="subcellular location">
    <subcellularLocation>
        <location evidence="1">Cytoplasm</location>
    </subcellularLocation>
    <text evidence="1">Associated with the membrane possibly through PlsY.</text>
</comment>
<comment type="similarity">
    <text evidence="1">Belongs to the PlsX family.</text>
</comment>